<name>YF66_SCHPO</name>
<comment type="subcellular location">
    <subcellularLocation>
        <location evidence="1">Cytoplasm</location>
    </subcellularLocation>
    <subcellularLocation>
        <location evidence="1">Nucleus</location>
    </subcellularLocation>
</comment>
<comment type="similarity">
    <text evidence="2">Belongs to the UPF0665 family.</text>
</comment>
<protein>
    <recommendedName>
        <fullName>UPF0665 family protein C23C4.06c</fullName>
    </recommendedName>
</protein>
<proteinExistence type="inferred from homology"/>
<evidence type="ECO:0000269" key="1">
    <source>
    </source>
</evidence>
<evidence type="ECO:0000305" key="2"/>
<dbReference type="EMBL" id="CU329670">
    <property type="protein sequence ID" value="CAB16877.1"/>
    <property type="molecule type" value="Genomic_DNA"/>
</dbReference>
<dbReference type="PIR" id="T38261">
    <property type="entry name" value="T38261"/>
</dbReference>
<dbReference type="SMR" id="O13926"/>
<dbReference type="BioGRID" id="278432">
    <property type="interactions" value="4"/>
</dbReference>
<dbReference type="FunCoup" id="O13926">
    <property type="interactions" value="420"/>
</dbReference>
<dbReference type="STRING" id="284812.O13926"/>
<dbReference type="PaxDb" id="4896-SPAC23C4.06c.1"/>
<dbReference type="EnsemblFungi" id="SPAC23C4.06c.1">
    <property type="protein sequence ID" value="SPAC23C4.06c.1:pep"/>
    <property type="gene ID" value="SPAC23C4.06c"/>
</dbReference>
<dbReference type="KEGG" id="spo:2541945"/>
<dbReference type="PomBase" id="SPAC23C4.06c"/>
<dbReference type="VEuPathDB" id="FungiDB:SPAC23C4.06c"/>
<dbReference type="eggNOG" id="KOG2793">
    <property type="taxonomic scope" value="Eukaryota"/>
</dbReference>
<dbReference type="HOGENOM" id="CLU_036731_1_0_1"/>
<dbReference type="InParanoid" id="O13926"/>
<dbReference type="OMA" id="LYENLDW"/>
<dbReference type="PhylomeDB" id="O13926"/>
<dbReference type="Reactome" id="R-SPO-8876725">
    <property type="pathway name" value="Protein methylation"/>
</dbReference>
<dbReference type="PRO" id="PR:O13926"/>
<dbReference type="Proteomes" id="UP000002485">
    <property type="component" value="Chromosome I"/>
</dbReference>
<dbReference type="GO" id="GO:0005829">
    <property type="term" value="C:cytosol"/>
    <property type="evidence" value="ECO:0007005"/>
    <property type="project" value="PomBase"/>
</dbReference>
<dbReference type="GO" id="GO:0005634">
    <property type="term" value="C:nucleus"/>
    <property type="evidence" value="ECO:0007669"/>
    <property type="project" value="UniProtKB-SubCell"/>
</dbReference>
<dbReference type="GO" id="GO:0032991">
    <property type="term" value="C:protein-containing complex"/>
    <property type="evidence" value="ECO:0000318"/>
    <property type="project" value="GO_Central"/>
</dbReference>
<dbReference type="GO" id="GO:0008276">
    <property type="term" value="F:protein methyltransferase activity"/>
    <property type="evidence" value="ECO:0000318"/>
    <property type="project" value="GO_Central"/>
</dbReference>
<dbReference type="GO" id="GO:0016279">
    <property type="term" value="F:protein-lysine N-methyltransferase activity"/>
    <property type="evidence" value="ECO:0000266"/>
    <property type="project" value="PomBase"/>
</dbReference>
<dbReference type="GO" id="GO:0002182">
    <property type="term" value="P:cytoplasmic translational elongation"/>
    <property type="evidence" value="ECO:0000250"/>
    <property type="project" value="PomBase"/>
</dbReference>
<dbReference type="CDD" id="cd02440">
    <property type="entry name" value="AdoMet_MTases"/>
    <property type="match status" value="1"/>
</dbReference>
<dbReference type="Gene3D" id="3.40.50.150">
    <property type="entry name" value="Vaccinia Virus protein VP39"/>
    <property type="match status" value="1"/>
</dbReference>
<dbReference type="InterPro" id="IPR019410">
    <property type="entry name" value="Methyltransf_16"/>
</dbReference>
<dbReference type="InterPro" id="IPR029063">
    <property type="entry name" value="SAM-dependent_MTases_sf"/>
</dbReference>
<dbReference type="PANTHER" id="PTHR14614">
    <property type="entry name" value="HEPATOCELLULAR CARCINOMA-ASSOCIATED ANTIGEN"/>
    <property type="match status" value="1"/>
</dbReference>
<dbReference type="PANTHER" id="PTHR14614:SF109">
    <property type="entry name" value="RIBOSOMAL LYSINE N-METHYLTRANSFERASE 5"/>
    <property type="match status" value="1"/>
</dbReference>
<dbReference type="Pfam" id="PF10294">
    <property type="entry name" value="Methyltransf_16"/>
    <property type="match status" value="1"/>
</dbReference>
<dbReference type="SUPFAM" id="SSF53335">
    <property type="entry name" value="S-adenosyl-L-methionine-dependent methyltransferases"/>
    <property type="match status" value="1"/>
</dbReference>
<gene>
    <name type="ORF">SPAC23C4.06c</name>
</gene>
<accession>O13926</accession>
<keyword id="KW-0963">Cytoplasm</keyword>
<keyword id="KW-0539">Nucleus</keyword>
<keyword id="KW-1185">Reference proteome</keyword>
<feature type="chain" id="PRO_0000352829" description="UPF0665 family protein C23C4.06c">
    <location>
        <begin position="1"/>
        <end position="327"/>
    </location>
</feature>
<organism>
    <name type="scientific">Schizosaccharomyces pombe (strain 972 / ATCC 24843)</name>
    <name type="common">Fission yeast</name>
    <dbReference type="NCBI Taxonomy" id="284812"/>
    <lineage>
        <taxon>Eukaryota</taxon>
        <taxon>Fungi</taxon>
        <taxon>Dikarya</taxon>
        <taxon>Ascomycota</taxon>
        <taxon>Taphrinomycotina</taxon>
        <taxon>Schizosaccharomycetes</taxon>
        <taxon>Schizosaccharomycetales</taxon>
        <taxon>Schizosaccharomycetaceae</taxon>
        <taxon>Schizosaccharomyces</taxon>
    </lineage>
</organism>
<reference key="1">
    <citation type="journal article" date="2002" name="Nature">
        <title>The genome sequence of Schizosaccharomyces pombe.</title>
        <authorList>
            <person name="Wood V."/>
            <person name="Gwilliam R."/>
            <person name="Rajandream M.A."/>
            <person name="Lyne M.H."/>
            <person name="Lyne R."/>
            <person name="Stewart A."/>
            <person name="Sgouros J.G."/>
            <person name="Peat N."/>
            <person name="Hayles J."/>
            <person name="Baker S.G."/>
            <person name="Basham D."/>
            <person name="Bowman S."/>
            <person name="Brooks K."/>
            <person name="Brown D."/>
            <person name="Brown S."/>
            <person name="Chillingworth T."/>
            <person name="Churcher C.M."/>
            <person name="Collins M."/>
            <person name="Connor R."/>
            <person name="Cronin A."/>
            <person name="Davis P."/>
            <person name="Feltwell T."/>
            <person name="Fraser A."/>
            <person name="Gentles S."/>
            <person name="Goble A."/>
            <person name="Hamlin N."/>
            <person name="Harris D.E."/>
            <person name="Hidalgo J."/>
            <person name="Hodgson G."/>
            <person name="Holroyd S."/>
            <person name="Hornsby T."/>
            <person name="Howarth S."/>
            <person name="Huckle E.J."/>
            <person name="Hunt S."/>
            <person name="Jagels K."/>
            <person name="James K.D."/>
            <person name="Jones L."/>
            <person name="Jones M."/>
            <person name="Leather S."/>
            <person name="McDonald S."/>
            <person name="McLean J."/>
            <person name="Mooney P."/>
            <person name="Moule S."/>
            <person name="Mungall K.L."/>
            <person name="Murphy L.D."/>
            <person name="Niblett D."/>
            <person name="Odell C."/>
            <person name="Oliver K."/>
            <person name="O'Neil S."/>
            <person name="Pearson D."/>
            <person name="Quail M.A."/>
            <person name="Rabbinowitsch E."/>
            <person name="Rutherford K.M."/>
            <person name="Rutter S."/>
            <person name="Saunders D."/>
            <person name="Seeger K."/>
            <person name="Sharp S."/>
            <person name="Skelton J."/>
            <person name="Simmonds M.N."/>
            <person name="Squares R."/>
            <person name="Squares S."/>
            <person name="Stevens K."/>
            <person name="Taylor K."/>
            <person name="Taylor R.G."/>
            <person name="Tivey A."/>
            <person name="Walsh S.V."/>
            <person name="Warren T."/>
            <person name="Whitehead S."/>
            <person name="Woodward J.R."/>
            <person name="Volckaert G."/>
            <person name="Aert R."/>
            <person name="Robben J."/>
            <person name="Grymonprez B."/>
            <person name="Weltjens I."/>
            <person name="Vanstreels E."/>
            <person name="Rieger M."/>
            <person name="Schaefer M."/>
            <person name="Mueller-Auer S."/>
            <person name="Gabel C."/>
            <person name="Fuchs M."/>
            <person name="Duesterhoeft A."/>
            <person name="Fritzc C."/>
            <person name="Holzer E."/>
            <person name="Moestl D."/>
            <person name="Hilbert H."/>
            <person name="Borzym K."/>
            <person name="Langer I."/>
            <person name="Beck A."/>
            <person name="Lehrach H."/>
            <person name="Reinhardt R."/>
            <person name="Pohl T.M."/>
            <person name="Eger P."/>
            <person name="Zimmermann W."/>
            <person name="Wedler H."/>
            <person name="Wambutt R."/>
            <person name="Purnelle B."/>
            <person name="Goffeau A."/>
            <person name="Cadieu E."/>
            <person name="Dreano S."/>
            <person name="Gloux S."/>
            <person name="Lelaure V."/>
            <person name="Mottier S."/>
            <person name="Galibert F."/>
            <person name="Aves S.J."/>
            <person name="Xiang Z."/>
            <person name="Hunt C."/>
            <person name="Moore K."/>
            <person name="Hurst S.M."/>
            <person name="Lucas M."/>
            <person name="Rochet M."/>
            <person name="Gaillardin C."/>
            <person name="Tallada V.A."/>
            <person name="Garzon A."/>
            <person name="Thode G."/>
            <person name="Daga R.R."/>
            <person name="Cruzado L."/>
            <person name="Jimenez J."/>
            <person name="Sanchez M."/>
            <person name="del Rey F."/>
            <person name="Benito J."/>
            <person name="Dominguez A."/>
            <person name="Revuelta J.L."/>
            <person name="Moreno S."/>
            <person name="Armstrong J."/>
            <person name="Forsburg S.L."/>
            <person name="Cerutti L."/>
            <person name="Lowe T."/>
            <person name="McCombie W.R."/>
            <person name="Paulsen I."/>
            <person name="Potashkin J."/>
            <person name="Shpakovski G.V."/>
            <person name="Ussery D."/>
            <person name="Barrell B.G."/>
            <person name="Nurse P."/>
        </authorList>
    </citation>
    <scope>NUCLEOTIDE SEQUENCE [LARGE SCALE GENOMIC DNA]</scope>
    <source>
        <strain>972 / ATCC 24843</strain>
    </source>
</reference>
<reference key="2">
    <citation type="journal article" date="2006" name="Nat. Biotechnol.">
        <title>ORFeome cloning and global analysis of protein localization in the fission yeast Schizosaccharomyces pombe.</title>
        <authorList>
            <person name="Matsuyama A."/>
            <person name="Arai R."/>
            <person name="Yashiroda Y."/>
            <person name="Shirai A."/>
            <person name="Kamata A."/>
            <person name="Sekido S."/>
            <person name="Kobayashi Y."/>
            <person name="Hashimoto A."/>
            <person name="Hamamoto M."/>
            <person name="Hiraoka Y."/>
            <person name="Horinouchi S."/>
            <person name="Yoshida M."/>
        </authorList>
    </citation>
    <scope>SUBCELLULAR LOCATION [LARGE SCALE ANALYSIS]</scope>
</reference>
<sequence length="327" mass="37777">MTFYYIRILRLQEKLEESFKYALRVVFTITSDLGEVSYPQDATVRVEALDRQQSHSRITISKQCVSWIGNGHAAETTLYFPASHQQIQLTLHLENQNSIVDSIHINADTVLPVWSEAFSPKSTLPNMVWRYIQGPEKKSPNDGLWFLEQMGNSIAKHLWDAGVVFSKKILSDDWHYSFSNRKDINVLELGSGCGIVGISIASKYPRALVSMTDTEDAIEFMEKNVEKNKSAMSNNITSDILVWGHDIPRKFRRHWDYIVMSDVMYNESSFSDLEASLQELMDKNTKLYIAYKKRHDNEKTFMSNILGWLDLVYEERGPITIYILQKK</sequence>